<proteinExistence type="inferred from homology"/>
<accession>Q03SE4</accession>
<keyword id="KW-0030">Aminoacyl-tRNA synthetase</keyword>
<keyword id="KW-0067">ATP-binding</keyword>
<keyword id="KW-0963">Cytoplasm</keyword>
<keyword id="KW-0436">Ligase</keyword>
<keyword id="KW-0547">Nucleotide-binding</keyword>
<keyword id="KW-0648">Protein biosynthesis</keyword>
<keyword id="KW-1185">Reference proteome</keyword>
<reference key="1">
    <citation type="journal article" date="2006" name="Proc. Natl. Acad. Sci. U.S.A.">
        <title>Comparative genomics of the lactic acid bacteria.</title>
        <authorList>
            <person name="Makarova K.S."/>
            <person name="Slesarev A."/>
            <person name="Wolf Y.I."/>
            <person name="Sorokin A."/>
            <person name="Mirkin B."/>
            <person name="Koonin E.V."/>
            <person name="Pavlov A."/>
            <person name="Pavlova N."/>
            <person name="Karamychev V."/>
            <person name="Polouchine N."/>
            <person name="Shakhova V."/>
            <person name="Grigoriev I."/>
            <person name="Lou Y."/>
            <person name="Rohksar D."/>
            <person name="Lucas S."/>
            <person name="Huang K."/>
            <person name="Goodstein D.M."/>
            <person name="Hawkins T."/>
            <person name="Plengvidhya V."/>
            <person name="Welker D."/>
            <person name="Hughes J."/>
            <person name="Goh Y."/>
            <person name="Benson A."/>
            <person name="Baldwin K."/>
            <person name="Lee J.-H."/>
            <person name="Diaz-Muniz I."/>
            <person name="Dosti B."/>
            <person name="Smeianov V."/>
            <person name="Wechter W."/>
            <person name="Barabote R."/>
            <person name="Lorca G."/>
            <person name="Altermann E."/>
            <person name="Barrangou R."/>
            <person name="Ganesan B."/>
            <person name="Xie Y."/>
            <person name="Rawsthorne H."/>
            <person name="Tamir D."/>
            <person name="Parker C."/>
            <person name="Breidt F."/>
            <person name="Broadbent J.R."/>
            <person name="Hutkins R."/>
            <person name="O'Sullivan D."/>
            <person name="Steele J."/>
            <person name="Unlu G."/>
            <person name="Saier M.H. Jr."/>
            <person name="Klaenhammer T."/>
            <person name="Richardson P."/>
            <person name="Kozyavkin S."/>
            <person name="Weimer B.C."/>
            <person name="Mills D.A."/>
        </authorList>
    </citation>
    <scope>NUCLEOTIDE SEQUENCE [LARGE SCALE GENOMIC DNA]</scope>
    <source>
        <strain>ATCC 367 / BCRC 12310 / CIP 105137 / JCM 1170 / LMG 11437 / NCIMB 947 / NCTC 947</strain>
    </source>
</reference>
<protein>
    <recommendedName>
        <fullName evidence="1">Histidine--tRNA ligase</fullName>
        <ecNumber evidence="1">6.1.1.21</ecNumber>
    </recommendedName>
    <alternativeName>
        <fullName evidence="1">Histidyl-tRNA synthetase</fullName>
        <shortName evidence="1">HisRS</shortName>
    </alternativeName>
</protein>
<dbReference type="EC" id="6.1.1.21" evidence="1"/>
<dbReference type="EMBL" id="CP000416">
    <property type="protein sequence ID" value="ABJ63878.1"/>
    <property type="molecule type" value="Genomic_DNA"/>
</dbReference>
<dbReference type="RefSeq" id="WP_011667509.1">
    <property type="nucleotide sequence ID" value="NC_008497.1"/>
</dbReference>
<dbReference type="SMR" id="Q03SE4"/>
<dbReference type="STRING" id="387344.LVIS_0735"/>
<dbReference type="KEGG" id="lbr:LVIS_0735"/>
<dbReference type="eggNOG" id="COG0124">
    <property type="taxonomic scope" value="Bacteria"/>
</dbReference>
<dbReference type="HOGENOM" id="CLU_025113_1_1_9"/>
<dbReference type="Proteomes" id="UP000001652">
    <property type="component" value="Chromosome"/>
</dbReference>
<dbReference type="GO" id="GO:0005737">
    <property type="term" value="C:cytoplasm"/>
    <property type="evidence" value="ECO:0007669"/>
    <property type="project" value="UniProtKB-SubCell"/>
</dbReference>
<dbReference type="GO" id="GO:0005524">
    <property type="term" value="F:ATP binding"/>
    <property type="evidence" value="ECO:0007669"/>
    <property type="project" value="UniProtKB-UniRule"/>
</dbReference>
<dbReference type="GO" id="GO:0140096">
    <property type="term" value="F:catalytic activity, acting on a protein"/>
    <property type="evidence" value="ECO:0007669"/>
    <property type="project" value="UniProtKB-ARBA"/>
</dbReference>
<dbReference type="GO" id="GO:0004821">
    <property type="term" value="F:histidine-tRNA ligase activity"/>
    <property type="evidence" value="ECO:0007669"/>
    <property type="project" value="UniProtKB-UniRule"/>
</dbReference>
<dbReference type="GO" id="GO:0016740">
    <property type="term" value="F:transferase activity"/>
    <property type="evidence" value="ECO:0007669"/>
    <property type="project" value="UniProtKB-ARBA"/>
</dbReference>
<dbReference type="GO" id="GO:0006427">
    <property type="term" value="P:histidyl-tRNA aminoacylation"/>
    <property type="evidence" value="ECO:0007669"/>
    <property type="project" value="UniProtKB-UniRule"/>
</dbReference>
<dbReference type="CDD" id="cd00773">
    <property type="entry name" value="HisRS-like_core"/>
    <property type="match status" value="1"/>
</dbReference>
<dbReference type="CDD" id="cd00859">
    <property type="entry name" value="HisRS_anticodon"/>
    <property type="match status" value="1"/>
</dbReference>
<dbReference type="FunFam" id="3.30.930.10:FF:000005">
    <property type="entry name" value="Histidine--tRNA ligase"/>
    <property type="match status" value="1"/>
</dbReference>
<dbReference type="Gene3D" id="3.40.50.800">
    <property type="entry name" value="Anticodon-binding domain"/>
    <property type="match status" value="1"/>
</dbReference>
<dbReference type="Gene3D" id="3.30.930.10">
    <property type="entry name" value="Bira Bifunctional Protein, Domain 2"/>
    <property type="match status" value="1"/>
</dbReference>
<dbReference type="HAMAP" id="MF_00127">
    <property type="entry name" value="His_tRNA_synth"/>
    <property type="match status" value="1"/>
</dbReference>
<dbReference type="InterPro" id="IPR006195">
    <property type="entry name" value="aa-tRNA-synth_II"/>
</dbReference>
<dbReference type="InterPro" id="IPR045864">
    <property type="entry name" value="aa-tRNA-synth_II/BPL/LPL"/>
</dbReference>
<dbReference type="InterPro" id="IPR004154">
    <property type="entry name" value="Anticodon-bd"/>
</dbReference>
<dbReference type="InterPro" id="IPR036621">
    <property type="entry name" value="Anticodon-bd_dom_sf"/>
</dbReference>
<dbReference type="InterPro" id="IPR015807">
    <property type="entry name" value="His-tRNA-ligase"/>
</dbReference>
<dbReference type="InterPro" id="IPR041715">
    <property type="entry name" value="HisRS-like_core"/>
</dbReference>
<dbReference type="InterPro" id="IPR004516">
    <property type="entry name" value="HisRS/HisZ"/>
</dbReference>
<dbReference type="InterPro" id="IPR033656">
    <property type="entry name" value="HisRS_anticodon"/>
</dbReference>
<dbReference type="NCBIfam" id="TIGR00442">
    <property type="entry name" value="hisS"/>
    <property type="match status" value="1"/>
</dbReference>
<dbReference type="PANTHER" id="PTHR43707:SF1">
    <property type="entry name" value="HISTIDINE--TRNA LIGASE, MITOCHONDRIAL-RELATED"/>
    <property type="match status" value="1"/>
</dbReference>
<dbReference type="PANTHER" id="PTHR43707">
    <property type="entry name" value="HISTIDYL-TRNA SYNTHETASE"/>
    <property type="match status" value="1"/>
</dbReference>
<dbReference type="Pfam" id="PF03129">
    <property type="entry name" value="HGTP_anticodon"/>
    <property type="match status" value="1"/>
</dbReference>
<dbReference type="Pfam" id="PF13393">
    <property type="entry name" value="tRNA-synt_His"/>
    <property type="match status" value="1"/>
</dbReference>
<dbReference type="PIRSF" id="PIRSF001549">
    <property type="entry name" value="His-tRNA_synth"/>
    <property type="match status" value="1"/>
</dbReference>
<dbReference type="SUPFAM" id="SSF52954">
    <property type="entry name" value="Class II aaRS ABD-related"/>
    <property type="match status" value="1"/>
</dbReference>
<dbReference type="SUPFAM" id="SSF55681">
    <property type="entry name" value="Class II aaRS and biotin synthetases"/>
    <property type="match status" value="1"/>
</dbReference>
<dbReference type="PROSITE" id="PS50862">
    <property type="entry name" value="AA_TRNA_LIGASE_II"/>
    <property type="match status" value="1"/>
</dbReference>
<name>SYH_LEVBA</name>
<evidence type="ECO:0000255" key="1">
    <source>
        <dbReference type="HAMAP-Rule" id="MF_00127"/>
    </source>
</evidence>
<gene>
    <name evidence="1" type="primary">hisS</name>
    <name type="ordered locus">LVIS_0735</name>
</gene>
<feature type="chain" id="PRO_1000016375" description="Histidine--tRNA ligase">
    <location>
        <begin position="1"/>
        <end position="431"/>
    </location>
</feature>
<sequence>MRYQRPKGTADILPGDSQTWQFVEATARQLFANYRFEEIRTPMFENFEVFSRTSGDTSDIVTKEMYDFKDKGDRHLSLRPEGTAGVVRAFVENKLYGPETQKPYKVYYMGPMFRYERPQSGRQRQFHQIGVEAFGSDAPELDVEVIALGMNLLGKLGLTHLRLAVNTLGDQETRTAYRQALIDFLEPHFDELSEDSKVRLHKNPLRVLDSKDKHDQELVADAPSILDFLTPTATAHFDRVKASLDALGIDYDVDATMVRGLDYYNHTIFEIMADSPALGEGYTTVLAGGRYNGLVEELGGPEMPGVGFGLGVERLVLLMQAEQVAIPDNHPLDVYVVGIGDQTSLATLKIVQAIRQSGLTADRDYLDRKPKAQFKTANRLNAAYTLTIGEQELADHTANLKSMATGEEISVPLADIYQDFQNVVATKFTAK</sequence>
<comment type="catalytic activity">
    <reaction evidence="1">
        <text>tRNA(His) + L-histidine + ATP = L-histidyl-tRNA(His) + AMP + diphosphate + H(+)</text>
        <dbReference type="Rhea" id="RHEA:17313"/>
        <dbReference type="Rhea" id="RHEA-COMP:9665"/>
        <dbReference type="Rhea" id="RHEA-COMP:9689"/>
        <dbReference type="ChEBI" id="CHEBI:15378"/>
        <dbReference type="ChEBI" id="CHEBI:30616"/>
        <dbReference type="ChEBI" id="CHEBI:33019"/>
        <dbReference type="ChEBI" id="CHEBI:57595"/>
        <dbReference type="ChEBI" id="CHEBI:78442"/>
        <dbReference type="ChEBI" id="CHEBI:78527"/>
        <dbReference type="ChEBI" id="CHEBI:456215"/>
        <dbReference type="EC" id="6.1.1.21"/>
    </reaction>
</comment>
<comment type="subunit">
    <text evidence="1">Homodimer.</text>
</comment>
<comment type="subcellular location">
    <subcellularLocation>
        <location evidence="1">Cytoplasm</location>
    </subcellularLocation>
</comment>
<comment type="similarity">
    <text evidence="1">Belongs to the class-II aminoacyl-tRNA synthetase family.</text>
</comment>
<organism>
    <name type="scientific">Levilactobacillus brevis (strain ATCC 367 / BCRC 12310 / CIP 105137 / JCM 1170 / LMG 11437 / NCIMB 947 / NCTC 947)</name>
    <name type="common">Lactobacillus brevis</name>
    <dbReference type="NCBI Taxonomy" id="387344"/>
    <lineage>
        <taxon>Bacteria</taxon>
        <taxon>Bacillati</taxon>
        <taxon>Bacillota</taxon>
        <taxon>Bacilli</taxon>
        <taxon>Lactobacillales</taxon>
        <taxon>Lactobacillaceae</taxon>
        <taxon>Levilactobacillus</taxon>
    </lineage>
</organism>